<accession>Q58939</accession>
<gene>
    <name type="ordered locus">MJ1544</name>
</gene>
<feature type="chain" id="PRO_0000107400" description="Uncharacterized protein MJ1544">
    <location>
        <begin position="1"/>
        <end position="441"/>
    </location>
</feature>
<feature type="binding site" evidence="1">
    <location>
        <begin position="57"/>
        <end position="64"/>
    </location>
    <ligand>
        <name>ATP</name>
        <dbReference type="ChEBI" id="CHEBI:30616"/>
    </ligand>
</feature>
<organism>
    <name type="scientific">Methanocaldococcus jannaschii (strain ATCC 43067 / DSM 2661 / JAL-1 / JCM 10045 / NBRC 100440)</name>
    <name type="common">Methanococcus jannaschii</name>
    <dbReference type="NCBI Taxonomy" id="243232"/>
    <lineage>
        <taxon>Archaea</taxon>
        <taxon>Methanobacteriati</taxon>
        <taxon>Methanobacteriota</taxon>
        <taxon>Methanomada group</taxon>
        <taxon>Methanococci</taxon>
        <taxon>Methanococcales</taxon>
        <taxon>Methanocaldococcaceae</taxon>
        <taxon>Methanocaldococcus</taxon>
    </lineage>
</organism>
<keyword id="KW-0067">ATP-binding</keyword>
<keyword id="KW-0547">Nucleotide-binding</keyword>
<keyword id="KW-1185">Reference proteome</keyword>
<dbReference type="EMBL" id="L77117">
    <property type="protein sequence ID" value="AAB99562.1"/>
    <property type="molecule type" value="Genomic_DNA"/>
</dbReference>
<dbReference type="PIR" id="G64492">
    <property type="entry name" value="G64492"/>
</dbReference>
<dbReference type="STRING" id="243232.MJ_1544"/>
<dbReference type="PaxDb" id="243232-MJ_1544"/>
<dbReference type="EnsemblBacteria" id="AAB99562">
    <property type="protein sequence ID" value="AAB99562"/>
    <property type="gene ID" value="MJ_1544"/>
</dbReference>
<dbReference type="KEGG" id="mja:MJ_1544"/>
<dbReference type="eggNOG" id="arCOG03167">
    <property type="taxonomic scope" value="Archaea"/>
</dbReference>
<dbReference type="HOGENOM" id="CLU_041527_0_0_2"/>
<dbReference type="InParanoid" id="Q58939"/>
<dbReference type="PhylomeDB" id="Q58939"/>
<dbReference type="Proteomes" id="UP000000805">
    <property type="component" value="Chromosome"/>
</dbReference>
<dbReference type="GO" id="GO:0005524">
    <property type="term" value="F:ATP binding"/>
    <property type="evidence" value="ECO:0007669"/>
    <property type="project" value="UniProtKB-KW"/>
</dbReference>
<dbReference type="InterPro" id="IPR041682">
    <property type="entry name" value="AAA_14"/>
</dbReference>
<dbReference type="InterPro" id="IPR025420">
    <property type="entry name" value="DUF4143"/>
</dbReference>
<dbReference type="InterPro" id="IPR027417">
    <property type="entry name" value="P-loop_NTPase"/>
</dbReference>
<dbReference type="PANTHER" id="PTHR33295:SF8">
    <property type="entry name" value="AAA+ ATPASE DOMAIN-CONTAINING PROTEIN"/>
    <property type="match status" value="1"/>
</dbReference>
<dbReference type="PANTHER" id="PTHR33295">
    <property type="entry name" value="ATPASE"/>
    <property type="match status" value="1"/>
</dbReference>
<dbReference type="Pfam" id="PF13173">
    <property type="entry name" value="AAA_14"/>
    <property type="match status" value="1"/>
</dbReference>
<dbReference type="Pfam" id="PF13635">
    <property type="entry name" value="DUF4143"/>
    <property type="match status" value="1"/>
</dbReference>
<dbReference type="SUPFAM" id="SSF52540">
    <property type="entry name" value="P-loop containing nucleoside triphosphate hydrolases"/>
    <property type="match status" value="1"/>
</dbReference>
<reference key="1">
    <citation type="journal article" date="1996" name="Science">
        <title>Complete genome sequence of the methanogenic archaeon, Methanococcus jannaschii.</title>
        <authorList>
            <person name="Bult C.J."/>
            <person name="White O."/>
            <person name="Olsen G.J."/>
            <person name="Zhou L."/>
            <person name="Fleischmann R.D."/>
            <person name="Sutton G.G."/>
            <person name="Blake J.A."/>
            <person name="FitzGerald L.M."/>
            <person name="Clayton R.A."/>
            <person name="Gocayne J.D."/>
            <person name="Kerlavage A.R."/>
            <person name="Dougherty B.A."/>
            <person name="Tomb J.-F."/>
            <person name="Adams M.D."/>
            <person name="Reich C.I."/>
            <person name="Overbeek R."/>
            <person name="Kirkness E.F."/>
            <person name="Weinstock K.G."/>
            <person name="Merrick J.M."/>
            <person name="Glodek A."/>
            <person name="Scott J.L."/>
            <person name="Geoghagen N.S.M."/>
            <person name="Weidman J.F."/>
            <person name="Fuhrmann J.L."/>
            <person name="Nguyen D."/>
            <person name="Utterback T.R."/>
            <person name="Kelley J.M."/>
            <person name="Peterson J.D."/>
            <person name="Sadow P.W."/>
            <person name="Hanna M.C."/>
            <person name="Cotton M.D."/>
            <person name="Roberts K.M."/>
            <person name="Hurst M.A."/>
            <person name="Kaine B.P."/>
            <person name="Borodovsky M."/>
            <person name="Klenk H.-P."/>
            <person name="Fraser C.M."/>
            <person name="Smith H.O."/>
            <person name="Woese C.R."/>
            <person name="Venter J.C."/>
        </authorList>
    </citation>
    <scope>NUCLEOTIDE SEQUENCE [LARGE SCALE GENOMIC DNA]</scope>
    <source>
        <strain>ATCC 43067 / DSM 2661 / JAL-1 / JCM 10045 / NBRC 100440</strain>
    </source>
</reference>
<protein>
    <recommendedName>
        <fullName>Uncharacterized protein MJ1544</fullName>
    </recommendedName>
</protein>
<name>Y1544_METJA</name>
<sequence>MSNILDIKILRVSSMIDKKILFEEVILDNLEIAKKAKVINRDIEIKLIPNKIKVIYGVRRGGKTYFLFQIINKHFKDDFIYINFEDERLINIALDELNELLKIALSIKNTKNLFFDEIQSVDNWDKFVRRLNDSGFNIFITGSSSKLLSKEIATSLRGRNLKTEILPLNFKEFLKFKNFNVKKRYSTIEKAELLKYLNEFIKFGGFPEITLIDDENIKKEILKEYLDGIFYRDVVERHSIRNIKEIKVLRNILINLFANEISIKKIANLLKEFNTKISRECIYNYLEYFSDAYLIFLLNNFSYKTKTISYSKLYVIDGMWNFSLSFSKNKGRILENLVFLELRRRGFVENENLFYVKRKNYEVDFLIFGENKELIQVCYELNETNKEREIKAYEKAIKDLKLDNVNLKIITYNDEGFEKITVDDKEHLIEIVPFWKWSLTY</sequence>
<proteinExistence type="predicted"/>
<evidence type="ECO:0000255" key="1"/>